<protein>
    <recommendedName>
        <fullName evidence="1">Small ribosomal subunit protein bS21</fullName>
    </recommendedName>
    <alternativeName>
        <fullName evidence="3">30S ribosomal protein S21</fullName>
    </alternativeName>
</protein>
<dbReference type="EMBL" id="CP000113">
    <property type="protein sequence ID" value="ABF90532.1"/>
    <property type="molecule type" value="Genomic_DNA"/>
</dbReference>
<dbReference type="RefSeq" id="WP_002614080.1">
    <property type="nucleotide sequence ID" value="NC_008095.1"/>
</dbReference>
<dbReference type="SMR" id="Q1D1W9"/>
<dbReference type="STRING" id="246197.MXAN_5201"/>
<dbReference type="EnsemblBacteria" id="ABF90532">
    <property type="protein sequence ID" value="ABF90532"/>
    <property type="gene ID" value="MXAN_5201"/>
</dbReference>
<dbReference type="GeneID" id="41362483"/>
<dbReference type="KEGG" id="mxa:MXAN_5201"/>
<dbReference type="eggNOG" id="COG0828">
    <property type="taxonomic scope" value="Bacteria"/>
</dbReference>
<dbReference type="HOGENOM" id="CLU_159258_1_2_7"/>
<dbReference type="OrthoDB" id="9799244at2"/>
<dbReference type="Proteomes" id="UP000002402">
    <property type="component" value="Chromosome"/>
</dbReference>
<dbReference type="GO" id="GO:1990904">
    <property type="term" value="C:ribonucleoprotein complex"/>
    <property type="evidence" value="ECO:0007669"/>
    <property type="project" value="UniProtKB-KW"/>
</dbReference>
<dbReference type="GO" id="GO:0005840">
    <property type="term" value="C:ribosome"/>
    <property type="evidence" value="ECO:0007669"/>
    <property type="project" value="UniProtKB-KW"/>
</dbReference>
<dbReference type="GO" id="GO:0003735">
    <property type="term" value="F:structural constituent of ribosome"/>
    <property type="evidence" value="ECO:0007669"/>
    <property type="project" value="InterPro"/>
</dbReference>
<dbReference type="GO" id="GO:0006412">
    <property type="term" value="P:translation"/>
    <property type="evidence" value="ECO:0007669"/>
    <property type="project" value="UniProtKB-UniRule"/>
</dbReference>
<dbReference type="Gene3D" id="1.20.5.1150">
    <property type="entry name" value="Ribosomal protein S8"/>
    <property type="match status" value="1"/>
</dbReference>
<dbReference type="HAMAP" id="MF_00358">
    <property type="entry name" value="Ribosomal_bS21"/>
    <property type="match status" value="1"/>
</dbReference>
<dbReference type="InterPro" id="IPR001911">
    <property type="entry name" value="Ribosomal_bS21"/>
</dbReference>
<dbReference type="InterPro" id="IPR018278">
    <property type="entry name" value="Ribosomal_bS21_CS"/>
</dbReference>
<dbReference type="InterPro" id="IPR038380">
    <property type="entry name" value="Ribosomal_bS21_sf"/>
</dbReference>
<dbReference type="NCBIfam" id="TIGR00030">
    <property type="entry name" value="S21p"/>
    <property type="match status" value="1"/>
</dbReference>
<dbReference type="PANTHER" id="PTHR21109">
    <property type="entry name" value="MITOCHONDRIAL 28S RIBOSOMAL PROTEIN S21"/>
    <property type="match status" value="1"/>
</dbReference>
<dbReference type="PANTHER" id="PTHR21109:SF22">
    <property type="entry name" value="SMALL RIBOSOMAL SUBUNIT PROTEIN BS21"/>
    <property type="match status" value="1"/>
</dbReference>
<dbReference type="Pfam" id="PF01165">
    <property type="entry name" value="Ribosomal_S21"/>
    <property type="match status" value="1"/>
</dbReference>
<dbReference type="PRINTS" id="PR00976">
    <property type="entry name" value="RIBOSOMALS21"/>
</dbReference>
<dbReference type="PROSITE" id="PS01181">
    <property type="entry name" value="RIBOSOMAL_S21"/>
    <property type="match status" value="1"/>
</dbReference>
<feature type="chain" id="PRO_0000266710" description="Small ribosomal subunit protein bS21">
    <location>
        <begin position="1"/>
        <end position="64"/>
    </location>
</feature>
<feature type="region of interest" description="Disordered" evidence="2">
    <location>
        <begin position="39"/>
        <end position="64"/>
    </location>
</feature>
<feature type="compositionally biased region" description="Basic residues" evidence="2">
    <location>
        <begin position="43"/>
        <end position="64"/>
    </location>
</feature>
<sequence>MPGIRVKEGESIESALKRFKKATEKAGILSEIRKREHYEKPSVKRKKKALAAKKRAVKKARKSF</sequence>
<gene>
    <name evidence="1" type="primary">rpsU</name>
    <name type="ordered locus">MXAN_5201</name>
</gene>
<organism>
    <name type="scientific">Myxococcus xanthus (strain DK1622)</name>
    <dbReference type="NCBI Taxonomy" id="246197"/>
    <lineage>
        <taxon>Bacteria</taxon>
        <taxon>Pseudomonadati</taxon>
        <taxon>Myxococcota</taxon>
        <taxon>Myxococcia</taxon>
        <taxon>Myxococcales</taxon>
        <taxon>Cystobacterineae</taxon>
        <taxon>Myxococcaceae</taxon>
        <taxon>Myxococcus</taxon>
    </lineage>
</organism>
<proteinExistence type="inferred from homology"/>
<accession>Q1D1W9</accession>
<reference key="1">
    <citation type="journal article" date="2006" name="Proc. Natl. Acad. Sci. U.S.A.">
        <title>Evolution of sensory complexity recorded in a myxobacterial genome.</title>
        <authorList>
            <person name="Goldman B.S."/>
            <person name="Nierman W.C."/>
            <person name="Kaiser D."/>
            <person name="Slater S.C."/>
            <person name="Durkin A.S."/>
            <person name="Eisen J.A."/>
            <person name="Ronning C.M."/>
            <person name="Barbazuk W.B."/>
            <person name="Blanchard M."/>
            <person name="Field C."/>
            <person name="Halling C."/>
            <person name="Hinkle G."/>
            <person name="Iartchuk O."/>
            <person name="Kim H.S."/>
            <person name="Mackenzie C."/>
            <person name="Madupu R."/>
            <person name="Miller N."/>
            <person name="Shvartsbeyn A."/>
            <person name="Sullivan S.A."/>
            <person name="Vaudin M."/>
            <person name="Wiegand R."/>
            <person name="Kaplan H.B."/>
        </authorList>
    </citation>
    <scope>NUCLEOTIDE SEQUENCE [LARGE SCALE GENOMIC DNA]</scope>
    <source>
        <strain>DK1622</strain>
    </source>
</reference>
<evidence type="ECO:0000255" key="1">
    <source>
        <dbReference type="HAMAP-Rule" id="MF_00358"/>
    </source>
</evidence>
<evidence type="ECO:0000256" key="2">
    <source>
        <dbReference type="SAM" id="MobiDB-lite"/>
    </source>
</evidence>
<evidence type="ECO:0000305" key="3"/>
<name>RS21_MYXXD</name>
<comment type="similarity">
    <text evidence="1">Belongs to the bacterial ribosomal protein bS21 family.</text>
</comment>
<keyword id="KW-1185">Reference proteome</keyword>
<keyword id="KW-0687">Ribonucleoprotein</keyword>
<keyword id="KW-0689">Ribosomal protein</keyword>